<proteinExistence type="inferred from homology"/>
<accession>Q0TD68</accession>
<comment type="similarity">
    <text evidence="1">Belongs to the UPF0441 family.</text>
</comment>
<comment type="sequence caution" evidence="3">
    <conflict type="erroneous initiation">
        <sequence resource="EMBL-CDS" id="ABG71111"/>
    </conflict>
</comment>
<protein>
    <recommendedName>
        <fullName evidence="1">UPF0441 protein YgiB</fullName>
    </recommendedName>
</protein>
<dbReference type="EMBL" id="CP000247">
    <property type="protein sequence ID" value="ABG71111.1"/>
    <property type="status" value="ALT_INIT"/>
    <property type="molecule type" value="Genomic_DNA"/>
</dbReference>
<dbReference type="RefSeq" id="WP_000831539.1">
    <property type="nucleotide sequence ID" value="NC_008253.1"/>
</dbReference>
<dbReference type="SMR" id="Q0TD68"/>
<dbReference type="KEGG" id="ecp:ECP_3128"/>
<dbReference type="HOGENOM" id="CLU_095624_0_0_6"/>
<dbReference type="Proteomes" id="UP000009182">
    <property type="component" value="Chromosome"/>
</dbReference>
<dbReference type="HAMAP" id="MF_01188">
    <property type="entry name" value="UPF0441"/>
    <property type="match status" value="1"/>
</dbReference>
<dbReference type="InterPro" id="IPR009576">
    <property type="entry name" value="Biofilm_formation_YgiB"/>
</dbReference>
<dbReference type="NCBIfam" id="NF008655">
    <property type="entry name" value="PRK11653.1"/>
    <property type="match status" value="1"/>
</dbReference>
<dbReference type="Pfam" id="PF06693">
    <property type="entry name" value="DUF1190"/>
    <property type="match status" value="1"/>
</dbReference>
<feature type="chain" id="PRO_0000293637" description="UPF0441 protein YgiB">
    <location>
        <begin position="1"/>
        <end position="223"/>
    </location>
</feature>
<feature type="region of interest" description="Disordered" evidence="2">
    <location>
        <begin position="178"/>
        <end position="223"/>
    </location>
</feature>
<feature type="compositionally biased region" description="Low complexity" evidence="2">
    <location>
        <begin position="178"/>
        <end position="195"/>
    </location>
</feature>
<feature type="compositionally biased region" description="Polar residues" evidence="2">
    <location>
        <begin position="204"/>
        <end position="223"/>
    </location>
</feature>
<reference key="1">
    <citation type="journal article" date="2006" name="Mol. Microbiol.">
        <title>Role of pathogenicity island-associated integrases in the genome plasticity of uropathogenic Escherichia coli strain 536.</title>
        <authorList>
            <person name="Hochhut B."/>
            <person name="Wilde C."/>
            <person name="Balling G."/>
            <person name="Middendorf B."/>
            <person name="Dobrindt U."/>
            <person name="Brzuszkiewicz E."/>
            <person name="Gottschalk G."/>
            <person name="Carniel E."/>
            <person name="Hacker J."/>
        </authorList>
    </citation>
    <scope>NUCLEOTIDE SEQUENCE [LARGE SCALE GENOMIC DNA]</scope>
    <source>
        <strain>536 / UPEC</strain>
    </source>
</reference>
<evidence type="ECO:0000255" key="1">
    <source>
        <dbReference type="HAMAP-Rule" id="MF_01188"/>
    </source>
</evidence>
<evidence type="ECO:0000256" key="2">
    <source>
        <dbReference type="SAM" id="MobiDB-lite"/>
    </source>
</evidence>
<evidence type="ECO:0000305" key="3"/>
<gene>
    <name evidence="1" type="primary">ygiB</name>
    <name type="ordered locus">ECP_3128</name>
</gene>
<sequence>MKRTKSIRHASFRKNWSARHLTPVALAVATVFMLAGCEKSDETVSLYQNADDCSAANPGKSAECTTAYNNALKEAERTAPKYATREDCVAEFGEGQCQQAPAQAGMAPENQAQAQQSSGSFWMPLMAGYMMGRLMGGGAGFAQQPLFSSKNPASPAYGKYTDATGKNYGAAQPGRTMTVPKTAMAPKPATTTTVTRGGFGESVAKQSTMQRGATGTSSRSMGG</sequence>
<organism>
    <name type="scientific">Escherichia coli O6:K15:H31 (strain 536 / UPEC)</name>
    <dbReference type="NCBI Taxonomy" id="362663"/>
    <lineage>
        <taxon>Bacteria</taxon>
        <taxon>Pseudomonadati</taxon>
        <taxon>Pseudomonadota</taxon>
        <taxon>Gammaproteobacteria</taxon>
        <taxon>Enterobacterales</taxon>
        <taxon>Enterobacteriaceae</taxon>
        <taxon>Escherichia</taxon>
    </lineage>
</organism>
<name>YGIB_ECOL5</name>